<gene>
    <name type="primary">fam3c</name>
</gene>
<keyword id="KW-0217">Developmental protein</keyword>
<keyword id="KW-1015">Disulfide bond</keyword>
<keyword id="KW-0430">Lectin</keyword>
<keyword id="KW-1185">Reference proteome</keyword>
<keyword id="KW-0964">Secreted</keyword>
<keyword id="KW-0732">Signal</keyword>
<protein>
    <recommendedName>
        <fullName>Protein FAM3C</fullName>
    </recommendedName>
</protein>
<feature type="signal peptide" evidence="2">
    <location>
        <begin position="1"/>
        <end position="24"/>
    </location>
</feature>
<feature type="chain" id="PRO_0000395984" description="Protein FAM3C">
    <location>
        <begin position="25"/>
        <end position="229"/>
    </location>
</feature>
<feature type="domain" description="GG-type lectin" evidence="3">
    <location>
        <begin position="68"/>
        <end position="226"/>
    </location>
</feature>
<feature type="disulfide bond" evidence="1">
    <location>
        <begin position="59"/>
        <end position="87"/>
    </location>
</feature>
<feature type="disulfide bond" evidence="1">
    <location>
        <begin position="65"/>
        <end position="222"/>
    </location>
</feature>
<evidence type="ECO:0000250" key="1"/>
<evidence type="ECO:0000255" key="2"/>
<evidence type="ECO:0000255" key="3">
    <source>
        <dbReference type="PROSITE-ProRule" id="PRU01375"/>
    </source>
</evidence>
<evidence type="ECO:0000269" key="4">
    <source>
    </source>
</evidence>
<evidence type="ECO:0000305" key="5"/>
<proteinExistence type="evidence at transcript level"/>
<sequence length="229" mass="25155">MRIAGAIKFVVAVALFLLTFYVISQVFEIKSYTNLGNIFVRSAIDTVAHPTTKAPRYRCGISKVCPEKHFAFKIASGAANVVGPKICVDDNILMSGVKNNVGRGINTALVNGKTGALIETTYHDLWGGEVGPFIEFLKKIPDGTIVLMATYDDGATKLNDDARKRISELGSTLINVLAFRDNWVFVGGKGIKTKSPFEQHIKNNKDTNKYEGWPEVVEMEGCIPQKLNE</sequence>
<organism>
    <name type="scientific">Xenopus laevis</name>
    <name type="common">African clawed frog</name>
    <dbReference type="NCBI Taxonomy" id="8355"/>
    <lineage>
        <taxon>Eukaryota</taxon>
        <taxon>Metazoa</taxon>
        <taxon>Chordata</taxon>
        <taxon>Craniata</taxon>
        <taxon>Vertebrata</taxon>
        <taxon>Euteleostomi</taxon>
        <taxon>Amphibia</taxon>
        <taxon>Batrachia</taxon>
        <taxon>Anura</taxon>
        <taxon>Pipoidea</taxon>
        <taxon>Pipidae</taxon>
        <taxon>Xenopodinae</taxon>
        <taxon>Xenopus</taxon>
        <taxon>Xenopus</taxon>
    </lineage>
</organism>
<accession>Q6GQC1</accession>
<name>FAM3C_XENLA</name>
<comment type="function">
    <text evidence="4">Involved in retinal laminar formation.</text>
</comment>
<comment type="subcellular location">
    <subcellularLocation>
        <location evidence="1">Secreted</location>
    </subcellularLocation>
</comment>
<comment type="tissue specificity">
    <text evidence="4">Expressed in the retinal ganglion cell layer.</text>
</comment>
<comment type="developmental stage">
    <text evidence="4">Expression starts at stage 32.</text>
</comment>
<comment type="similarity">
    <text evidence="5">Belongs to the FAM3 family.</text>
</comment>
<reference key="1">
    <citation type="submission" date="2004-06" db="EMBL/GenBank/DDBJ databases">
        <authorList>
            <consortium name="NIH - Xenopus Gene Collection (XGC) project"/>
        </authorList>
    </citation>
    <scope>NUCLEOTIDE SEQUENCE [LARGE SCALE MRNA]</scope>
    <source>
        <tissue>Embryo</tissue>
    </source>
</reference>
<reference key="2">
    <citation type="journal article" date="2010" name="Biochem. Biophys. Res. Commun.">
        <title>Secreted factor FAM3C (ILEI) is involved in retinal laminar formation.</title>
        <authorList>
            <person name="Katahira T."/>
            <person name="Nakagiri S."/>
            <person name="Terada K."/>
            <person name="Furukawa T."/>
        </authorList>
    </citation>
    <scope>DEVELOPMENTAL STAGE</scope>
    <scope>TISSUE SPECIFICITY</scope>
    <scope>FUNCTION</scope>
</reference>
<dbReference type="EMBL" id="BC072824">
    <property type="protein sequence ID" value="AAH72824.1"/>
    <property type="molecule type" value="mRNA"/>
</dbReference>
<dbReference type="RefSeq" id="NP_001085479.1">
    <property type="nucleotide sequence ID" value="NM_001092010.1"/>
</dbReference>
<dbReference type="RefSeq" id="XP_018106406.1">
    <property type="nucleotide sequence ID" value="XM_018250917.1"/>
</dbReference>
<dbReference type="SMR" id="Q6GQC1"/>
<dbReference type="GeneID" id="443905"/>
<dbReference type="KEGG" id="xla:443905"/>
<dbReference type="AGR" id="Xenbase:XB-GENE-943499"/>
<dbReference type="CTD" id="443905"/>
<dbReference type="Xenbase" id="XB-GENE-943499">
    <property type="gene designation" value="fam3c.L"/>
</dbReference>
<dbReference type="OMA" id="KACPANH"/>
<dbReference type="OrthoDB" id="440755at2759"/>
<dbReference type="Proteomes" id="UP000186698">
    <property type="component" value="Chromosome 3L"/>
</dbReference>
<dbReference type="Bgee" id="443905">
    <property type="expression patterns" value="Expressed in egg cell and 19 other cell types or tissues"/>
</dbReference>
<dbReference type="GO" id="GO:0005615">
    <property type="term" value="C:extracellular space"/>
    <property type="evidence" value="ECO:0000318"/>
    <property type="project" value="GO_Central"/>
</dbReference>
<dbReference type="GO" id="GO:0030246">
    <property type="term" value="F:carbohydrate binding"/>
    <property type="evidence" value="ECO:0007669"/>
    <property type="project" value="UniProtKB-KW"/>
</dbReference>
<dbReference type="CDD" id="cd13940">
    <property type="entry name" value="ILEI_FAM3C"/>
    <property type="match status" value="1"/>
</dbReference>
<dbReference type="InterPro" id="IPR039220">
    <property type="entry name" value="FAM3"/>
</dbReference>
<dbReference type="InterPro" id="IPR039477">
    <property type="entry name" value="ILEI/PANDER_dom"/>
</dbReference>
<dbReference type="InterPro" id="IPR039475">
    <property type="entry name" value="ILEI_FAM3C"/>
</dbReference>
<dbReference type="PANTHER" id="PTHR14592">
    <property type="entry name" value="UNCHARACTERIZED FAM3"/>
    <property type="match status" value="1"/>
</dbReference>
<dbReference type="Pfam" id="PF15711">
    <property type="entry name" value="ILEI"/>
    <property type="match status" value="1"/>
</dbReference>
<dbReference type="PROSITE" id="PS52031">
    <property type="entry name" value="GG_LECTIN"/>
    <property type="match status" value="1"/>
</dbReference>